<comment type="function">
    <text evidence="1">The enzymes which catalyze the reversible phosphorolysis of pyrimidine nucleosides are involved in the degradation of these compounds and in their utilization as carbon and energy sources, or in the rescue of pyrimidine bases for nucleotide synthesis.</text>
</comment>
<comment type="catalytic activity">
    <reaction evidence="1">
        <text>thymidine + phosphate = 2-deoxy-alpha-D-ribose 1-phosphate + thymine</text>
        <dbReference type="Rhea" id="RHEA:16037"/>
        <dbReference type="ChEBI" id="CHEBI:17748"/>
        <dbReference type="ChEBI" id="CHEBI:17821"/>
        <dbReference type="ChEBI" id="CHEBI:43474"/>
        <dbReference type="ChEBI" id="CHEBI:57259"/>
        <dbReference type="EC" id="2.4.2.4"/>
    </reaction>
</comment>
<comment type="pathway">
    <text evidence="1">Pyrimidine metabolism; dTMP biosynthesis via salvage pathway; dTMP from thymine: step 1/2.</text>
</comment>
<comment type="subunit">
    <text evidence="1">Homodimer.</text>
</comment>
<comment type="similarity">
    <text evidence="1">Belongs to the thymidine/pyrimidine-nucleoside phosphorylase family.</text>
</comment>
<accession>A0KU08</accession>
<dbReference type="EC" id="2.4.2.4" evidence="1"/>
<dbReference type="EMBL" id="CP000469">
    <property type="protein sequence ID" value="ABK47277.1"/>
    <property type="molecule type" value="Genomic_DNA"/>
</dbReference>
<dbReference type="RefSeq" id="WP_011716153.1">
    <property type="nucleotide sequence ID" value="NC_008577.1"/>
</dbReference>
<dbReference type="SMR" id="A0KU08"/>
<dbReference type="STRING" id="94122.Shewana3_1042"/>
<dbReference type="KEGG" id="shn:Shewana3_1042"/>
<dbReference type="eggNOG" id="COG0213">
    <property type="taxonomic scope" value="Bacteria"/>
</dbReference>
<dbReference type="HOGENOM" id="CLU_025040_0_1_6"/>
<dbReference type="OrthoDB" id="9763887at2"/>
<dbReference type="UniPathway" id="UPA00578">
    <property type="reaction ID" value="UER00638"/>
</dbReference>
<dbReference type="Proteomes" id="UP000002589">
    <property type="component" value="Chromosome"/>
</dbReference>
<dbReference type="GO" id="GO:0005829">
    <property type="term" value="C:cytosol"/>
    <property type="evidence" value="ECO:0007669"/>
    <property type="project" value="TreeGrafter"/>
</dbReference>
<dbReference type="GO" id="GO:0004645">
    <property type="term" value="F:1,4-alpha-oligoglucan phosphorylase activity"/>
    <property type="evidence" value="ECO:0007669"/>
    <property type="project" value="InterPro"/>
</dbReference>
<dbReference type="GO" id="GO:0009032">
    <property type="term" value="F:thymidine phosphorylase activity"/>
    <property type="evidence" value="ECO:0007669"/>
    <property type="project" value="UniProtKB-UniRule"/>
</dbReference>
<dbReference type="GO" id="GO:0006206">
    <property type="term" value="P:pyrimidine nucleobase metabolic process"/>
    <property type="evidence" value="ECO:0007669"/>
    <property type="project" value="InterPro"/>
</dbReference>
<dbReference type="GO" id="GO:0046104">
    <property type="term" value="P:thymidine metabolic process"/>
    <property type="evidence" value="ECO:0007669"/>
    <property type="project" value="UniProtKB-UniRule"/>
</dbReference>
<dbReference type="FunFam" id="3.40.1030.10:FF:000001">
    <property type="entry name" value="Thymidine phosphorylase"/>
    <property type="match status" value="1"/>
</dbReference>
<dbReference type="FunFam" id="3.90.1170.30:FF:000001">
    <property type="entry name" value="Thymidine phosphorylase"/>
    <property type="match status" value="1"/>
</dbReference>
<dbReference type="Gene3D" id="3.40.1030.10">
    <property type="entry name" value="Nucleoside phosphorylase/phosphoribosyltransferase catalytic domain"/>
    <property type="match status" value="1"/>
</dbReference>
<dbReference type="Gene3D" id="3.90.1170.30">
    <property type="entry name" value="Pyrimidine nucleoside phosphorylase-like, C-terminal domain"/>
    <property type="match status" value="1"/>
</dbReference>
<dbReference type="Gene3D" id="1.20.970.10">
    <property type="entry name" value="Transferase, Pyrimidine Nucleoside Phosphorylase, Chain C"/>
    <property type="match status" value="1"/>
</dbReference>
<dbReference type="HAMAP" id="MF_01628">
    <property type="entry name" value="Thymid_phosp"/>
    <property type="match status" value="1"/>
</dbReference>
<dbReference type="InterPro" id="IPR000312">
    <property type="entry name" value="Glycosyl_Trfase_fam3"/>
</dbReference>
<dbReference type="InterPro" id="IPR017459">
    <property type="entry name" value="Glycosyl_Trfase_fam3_N_dom"/>
</dbReference>
<dbReference type="InterPro" id="IPR036320">
    <property type="entry name" value="Glycosyl_Trfase_fam3_N_dom_sf"/>
</dbReference>
<dbReference type="InterPro" id="IPR035902">
    <property type="entry name" value="Nuc_phospho_transferase"/>
</dbReference>
<dbReference type="InterPro" id="IPR036566">
    <property type="entry name" value="PYNP-like_C_sf"/>
</dbReference>
<dbReference type="InterPro" id="IPR013102">
    <property type="entry name" value="PYNP_C"/>
</dbReference>
<dbReference type="InterPro" id="IPR018090">
    <property type="entry name" value="Pyrmidine_PPas_bac/euk"/>
</dbReference>
<dbReference type="InterPro" id="IPR017872">
    <property type="entry name" value="Pyrmidine_PPase_CS"/>
</dbReference>
<dbReference type="InterPro" id="IPR000053">
    <property type="entry name" value="Thymidine/pyrmidine_PPase"/>
</dbReference>
<dbReference type="InterPro" id="IPR013465">
    <property type="entry name" value="Thymidine_Pase"/>
</dbReference>
<dbReference type="NCBIfam" id="NF004490">
    <property type="entry name" value="PRK05820.1"/>
    <property type="match status" value="1"/>
</dbReference>
<dbReference type="NCBIfam" id="TIGR02643">
    <property type="entry name" value="T_phosphoryl"/>
    <property type="match status" value="1"/>
</dbReference>
<dbReference type="NCBIfam" id="TIGR02644">
    <property type="entry name" value="Y_phosphoryl"/>
    <property type="match status" value="1"/>
</dbReference>
<dbReference type="PANTHER" id="PTHR10515">
    <property type="entry name" value="THYMIDINE PHOSPHORYLASE"/>
    <property type="match status" value="1"/>
</dbReference>
<dbReference type="PANTHER" id="PTHR10515:SF0">
    <property type="entry name" value="THYMIDINE PHOSPHORYLASE"/>
    <property type="match status" value="1"/>
</dbReference>
<dbReference type="Pfam" id="PF02885">
    <property type="entry name" value="Glycos_trans_3N"/>
    <property type="match status" value="1"/>
</dbReference>
<dbReference type="Pfam" id="PF00591">
    <property type="entry name" value="Glycos_transf_3"/>
    <property type="match status" value="1"/>
</dbReference>
<dbReference type="Pfam" id="PF07831">
    <property type="entry name" value="PYNP_C"/>
    <property type="match status" value="1"/>
</dbReference>
<dbReference type="PIRSF" id="PIRSF000478">
    <property type="entry name" value="TP_PyNP"/>
    <property type="match status" value="1"/>
</dbReference>
<dbReference type="SMART" id="SM00941">
    <property type="entry name" value="PYNP_C"/>
    <property type="match status" value="1"/>
</dbReference>
<dbReference type="SUPFAM" id="SSF52418">
    <property type="entry name" value="Nucleoside phosphorylase/phosphoribosyltransferase catalytic domain"/>
    <property type="match status" value="1"/>
</dbReference>
<dbReference type="SUPFAM" id="SSF47648">
    <property type="entry name" value="Nucleoside phosphorylase/phosphoribosyltransferase N-terminal domain"/>
    <property type="match status" value="1"/>
</dbReference>
<dbReference type="SUPFAM" id="SSF54680">
    <property type="entry name" value="Pyrimidine nucleoside phosphorylase C-terminal domain"/>
    <property type="match status" value="1"/>
</dbReference>
<dbReference type="PROSITE" id="PS00647">
    <property type="entry name" value="THYMID_PHOSPHORYLASE"/>
    <property type="match status" value="1"/>
</dbReference>
<reference key="1">
    <citation type="submission" date="2006-09" db="EMBL/GenBank/DDBJ databases">
        <title>Complete sequence of chromosome 1 of Shewanella sp. ANA-3.</title>
        <authorList>
            <person name="Copeland A."/>
            <person name="Lucas S."/>
            <person name="Lapidus A."/>
            <person name="Barry K."/>
            <person name="Detter J.C."/>
            <person name="Glavina del Rio T."/>
            <person name="Hammon N."/>
            <person name="Israni S."/>
            <person name="Dalin E."/>
            <person name="Tice H."/>
            <person name="Pitluck S."/>
            <person name="Chertkov O."/>
            <person name="Brettin T."/>
            <person name="Bruce D."/>
            <person name="Han C."/>
            <person name="Tapia R."/>
            <person name="Gilna P."/>
            <person name="Schmutz J."/>
            <person name="Larimer F."/>
            <person name="Land M."/>
            <person name="Hauser L."/>
            <person name="Kyrpides N."/>
            <person name="Kim E."/>
            <person name="Newman D."/>
            <person name="Salticov C."/>
            <person name="Konstantinidis K."/>
            <person name="Klappenback J."/>
            <person name="Tiedje J."/>
            <person name="Richardson P."/>
        </authorList>
    </citation>
    <scope>NUCLEOTIDE SEQUENCE [LARGE SCALE GENOMIC DNA]</scope>
    <source>
        <strain>ANA-3</strain>
    </source>
</reference>
<proteinExistence type="inferred from homology"/>
<sequence>MFLAQEIIRKKRNGLALSTEEIQFFVKGITTNAVSEGQIAALGMAVYFNDMNMDERIALTTAMRDSGTVLNWQSLGLNGPVIDKHSTGGVGDVISLMLGPMAAACGGYVPMISGRGLGHTGGTLDKFDAIPGYQTEPSSELFRKVVKDVGVAIIGQTGDLVPADKRFYSIRDNTATVESISLITASILSKKLACSLDALAMDVKVGSGAFMPTYEASEELARSIAAVANGAGTKTTALLTDMNQVLASCAGNAVEVKEAIDFLTGAYRNPRLYAVTMGLCAEMLLLGGLASDEADARAKLNRVLDNGRAAEIFGKMVSGLGGPVDFVENYSKYLPQSQIIRPVFADTQGYAYSMDTRELGLAVVTLGGGRRKPGDALDYSVGLTQVCALGDKIDASTPIAVIHAQSEEAFAQAEEAVKKAIHIDEVAPEKTPEIYAYIRASDL</sequence>
<organism>
    <name type="scientific">Shewanella sp. (strain ANA-3)</name>
    <dbReference type="NCBI Taxonomy" id="94122"/>
    <lineage>
        <taxon>Bacteria</taxon>
        <taxon>Pseudomonadati</taxon>
        <taxon>Pseudomonadota</taxon>
        <taxon>Gammaproteobacteria</taxon>
        <taxon>Alteromonadales</taxon>
        <taxon>Shewanellaceae</taxon>
        <taxon>Shewanella</taxon>
    </lineage>
</organism>
<name>TYPH_SHESA</name>
<gene>
    <name evidence="1" type="primary">deoA</name>
    <name type="ordered locus">Shewana3_1042</name>
</gene>
<protein>
    <recommendedName>
        <fullName evidence="1">Thymidine phosphorylase</fullName>
        <ecNumber evidence="1">2.4.2.4</ecNumber>
    </recommendedName>
    <alternativeName>
        <fullName evidence="1">TdRPase</fullName>
    </alternativeName>
</protein>
<feature type="chain" id="PRO_1000069672" description="Thymidine phosphorylase">
    <location>
        <begin position="1"/>
        <end position="443"/>
    </location>
</feature>
<evidence type="ECO:0000255" key="1">
    <source>
        <dbReference type="HAMAP-Rule" id="MF_01628"/>
    </source>
</evidence>
<keyword id="KW-0328">Glycosyltransferase</keyword>
<keyword id="KW-0808">Transferase</keyword>